<dbReference type="EMBL" id="D17676">
    <property type="protein sequence ID" value="BAA04556.1"/>
    <property type="molecule type" value="mRNA"/>
</dbReference>
<dbReference type="PIR" id="JX0313">
    <property type="entry name" value="JX0313"/>
</dbReference>
<dbReference type="SMR" id="P39674"/>
<dbReference type="Allergome" id="764">
    <property type="allergen name" value="Der f HSP70"/>
</dbReference>
<dbReference type="GO" id="GO:0034663">
    <property type="term" value="C:endoplasmic reticulum chaperone complex"/>
    <property type="evidence" value="ECO:0007669"/>
    <property type="project" value="TreeGrafter"/>
</dbReference>
<dbReference type="GO" id="GO:0005524">
    <property type="term" value="F:ATP binding"/>
    <property type="evidence" value="ECO:0007669"/>
    <property type="project" value="UniProtKB-KW"/>
</dbReference>
<dbReference type="GO" id="GO:0140662">
    <property type="term" value="F:ATP-dependent protein folding chaperone"/>
    <property type="evidence" value="ECO:0007669"/>
    <property type="project" value="InterPro"/>
</dbReference>
<dbReference type="GO" id="GO:0030968">
    <property type="term" value="P:endoplasmic reticulum unfolded protein response"/>
    <property type="evidence" value="ECO:0007669"/>
    <property type="project" value="TreeGrafter"/>
</dbReference>
<dbReference type="FunFam" id="1.20.1270.10:FF:000003">
    <property type="entry name" value="heat shock cognate 71 kDa protein-like"/>
    <property type="match status" value="1"/>
</dbReference>
<dbReference type="Gene3D" id="1.20.1270.10">
    <property type="match status" value="1"/>
</dbReference>
<dbReference type="InterPro" id="IPR029048">
    <property type="entry name" value="HSP70_C_sf"/>
</dbReference>
<dbReference type="InterPro" id="IPR013126">
    <property type="entry name" value="Hsp_70_fam"/>
</dbReference>
<dbReference type="PANTHER" id="PTHR45639:SF34">
    <property type="entry name" value="CHAPERONE PROTEIN DNAK"/>
    <property type="match status" value="1"/>
</dbReference>
<dbReference type="PANTHER" id="PTHR45639">
    <property type="entry name" value="HSC70CB, ISOFORM G-RELATED"/>
    <property type="match status" value="1"/>
</dbReference>
<dbReference type="Pfam" id="PF00012">
    <property type="entry name" value="HSP70"/>
    <property type="match status" value="1"/>
</dbReference>
<dbReference type="SUPFAM" id="SSF100934">
    <property type="entry name" value="Heat shock protein 70kD (HSP70), C-terminal subdomain"/>
    <property type="match status" value="1"/>
</dbReference>
<feature type="chain" id="PRO_0000078301" description="Allergen MAG29">
    <location>
        <begin position="1" status="less than"/>
        <end position="145"/>
    </location>
</feature>
<feature type="region of interest" description="Disordered" evidence="1">
    <location>
        <begin position="1"/>
        <end position="21"/>
    </location>
</feature>
<feature type="region of interest" description="Disordered" evidence="1">
    <location>
        <begin position="103"/>
        <end position="145"/>
    </location>
</feature>
<feature type="compositionally biased region" description="Gly residues" evidence="1">
    <location>
        <begin position="104"/>
        <end position="137"/>
    </location>
</feature>
<feature type="non-terminal residue">
    <location>
        <position position="1"/>
    </location>
</feature>
<accession>P39674</accession>
<gene>
    <name type="primary">MAG29</name>
</gene>
<sequence>KDDIERMVKEAESYKEEDDKQRDRIAAKNSLEGYAFQMKATLDEEAIKSKVSEEDRKKILDKVDEVLKWLDANALAEKDEFEHQRKELESVCNPIITKLYQQAGGAGAGGMPGGFPGGFPGTDGSGGGAAGGDGGKSGPTIEEVD</sequence>
<reference key="1">
    <citation type="journal article" date="1994" name="J. Biochem.">
        <title>Cloning and expression of cDNA coding for a new allergen from the house dust mite, Dermatophagoides farinae: homology with human heat shock cognate proteins in the heat shock protein 70 family.</title>
        <authorList>
            <person name="Aki T."/>
            <person name="Fujikawa A."/>
            <person name="Wada T."/>
            <person name="Jyo T."/>
            <person name="Shigeta S."/>
            <person name="Murooka Y."/>
            <person name="Oka S."/>
            <person name="Ono K."/>
        </authorList>
    </citation>
    <scope>NUCLEOTIDE SEQUENCE [MRNA]</scope>
    <scope>PROTEIN SEQUENCE OF 1-17</scope>
</reference>
<protein>
    <recommendedName>
        <fullName>Allergen MAG29</fullName>
    </recommendedName>
</protein>
<comment type="allergen">
    <text>Causes an allergic reaction in human.</text>
</comment>
<comment type="similarity">
    <text evidence="2">Belongs to the heat shock protein 70 family.</text>
</comment>
<keyword id="KW-0020">Allergen</keyword>
<keyword id="KW-0067">ATP-binding</keyword>
<keyword id="KW-0903">Direct protein sequencing</keyword>
<keyword id="KW-0547">Nucleotide-binding</keyword>
<name>MAG29_DERFA</name>
<evidence type="ECO:0000256" key="1">
    <source>
        <dbReference type="SAM" id="MobiDB-lite"/>
    </source>
</evidence>
<evidence type="ECO:0000305" key="2"/>
<organism>
    <name type="scientific">Dermatophagoides farinae</name>
    <name type="common">American house dust mite</name>
    <dbReference type="NCBI Taxonomy" id="6954"/>
    <lineage>
        <taxon>Eukaryota</taxon>
        <taxon>Metazoa</taxon>
        <taxon>Ecdysozoa</taxon>
        <taxon>Arthropoda</taxon>
        <taxon>Chelicerata</taxon>
        <taxon>Arachnida</taxon>
        <taxon>Acari</taxon>
        <taxon>Acariformes</taxon>
        <taxon>Sarcoptiformes</taxon>
        <taxon>Astigmata</taxon>
        <taxon>Psoroptidia</taxon>
        <taxon>Analgoidea</taxon>
        <taxon>Pyroglyphidae</taxon>
        <taxon>Dermatophagoidinae</taxon>
        <taxon>Dermatophagoides</taxon>
    </lineage>
</organism>
<proteinExistence type="evidence at protein level"/>